<proteinExistence type="inferred from homology"/>
<accession>Q92EQ4</accession>
<organism>
    <name type="scientific">Listeria innocua serovar 6a (strain ATCC BAA-680 / CLIP 11262)</name>
    <dbReference type="NCBI Taxonomy" id="272626"/>
    <lineage>
        <taxon>Bacteria</taxon>
        <taxon>Bacillati</taxon>
        <taxon>Bacillota</taxon>
        <taxon>Bacilli</taxon>
        <taxon>Bacillales</taxon>
        <taxon>Listeriaceae</taxon>
        <taxon>Listeria</taxon>
    </lineage>
</organism>
<keyword id="KW-0378">Hydrolase</keyword>
<keyword id="KW-0460">Magnesium</keyword>
<keyword id="KW-0479">Metal-binding</keyword>
<keyword id="KW-0520">NAD</keyword>
<keyword id="KW-0786">Thiamine pyrophosphate</keyword>
<gene>
    <name evidence="1" type="primary">iolD</name>
    <name type="ordered locus">lin0404</name>
</gene>
<name>IOLD_LISIN</name>
<protein>
    <recommendedName>
        <fullName evidence="1">3D-(3,5/4)-trihydroxycyclohexane-1,2-dione hydrolase</fullName>
        <shortName evidence="1">THcHDO hydrolase</shortName>
        <ecNumber evidence="1">3.7.1.22</ecNumber>
    </recommendedName>
</protein>
<reference key="1">
    <citation type="journal article" date="2001" name="Science">
        <title>Comparative genomics of Listeria species.</title>
        <authorList>
            <person name="Glaser P."/>
            <person name="Frangeul L."/>
            <person name="Buchrieser C."/>
            <person name="Rusniok C."/>
            <person name="Amend A."/>
            <person name="Baquero F."/>
            <person name="Berche P."/>
            <person name="Bloecker H."/>
            <person name="Brandt P."/>
            <person name="Chakraborty T."/>
            <person name="Charbit A."/>
            <person name="Chetouani F."/>
            <person name="Couve E."/>
            <person name="de Daruvar A."/>
            <person name="Dehoux P."/>
            <person name="Domann E."/>
            <person name="Dominguez-Bernal G."/>
            <person name="Duchaud E."/>
            <person name="Durant L."/>
            <person name="Dussurget O."/>
            <person name="Entian K.-D."/>
            <person name="Fsihi H."/>
            <person name="Garcia-del Portillo F."/>
            <person name="Garrido P."/>
            <person name="Gautier L."/>
            <person name="Goebel W."/>
            <person name="Gomez-Lopez N."/>
            <person name="Hain T."/>
            <person name="Hauf J."/>
            <person name="Jackson D."/>
            <person name="Jones L.-M."/>
            <person name="Kaerst U."/>
            <person name="Kreft J."/>
            <person name="Kuhn M."/>
            <person name="Kunst F."/>
            <person name="Kurapkat G."/>
            <person name="Madueno E."/>
            <person name="Maitournam A."/>
            <person name="Mata Vicente J."/>
            <person name="Ng E."/>
            <person name="Nedjari H."/>
            <person name="Nordsiek G."/>
            <person name="Novella S."/>
            <person name="de Pablos B."/>
            <person name="Perez-Diaz J.-C."/>
            <person name="Purcell R."/>
            <person name="Remmel B."/>
            <person name="Rose M."/>
            <person name="Schlueter T."/>
            <person name="Simoes N."/>
            <person name="Tierrez A."/>
            <person name="Vazquez-Boland J.-A."/>
            <person name="Voss H."/>
            <person name="Wehland J."/>
            <person name="Cossart P."/>
        </authorList>
    </citation>
    <scope>NUCLEOTIDE SEQUENCE [LARGE SCALE GENOMIC DNA]</scope>
    <source>
        <strain>ATCC BAA-680 / CLIP 11262</strain>
    </source>
</reference>
<sequence length="638" mass="70526">MTEKTIRLTTAQALVKFLNQQYIEVDGESAPFVDGIFTLFGHGNVVGIGQALEENPGHLKVYQGKNEQGMAHAAIAYAKQKNRKRIYACSTSAGPGSANLITAAGTAFANNLPVLFLPADTFATRQPDPVLQQLEHESSTAITTNDGFQAVSKYFDRVQRPEQLMSALIRAFEVMTNPVSAGPATICIAQDTEGEAFDYPVTFFQKRIHYLNRQIPTKRELTEAAKLIKASQTPVIIVGGGARYSDARKELIALSEQNDIPLVETHAGKSTVEFSFKNNLGGTGILGTLAANKIIHEADLVIGIGTRYTDFTTSSKTAFNPATKFININVSRMQTYKLDAFQVVGDAKATLIELTPLLKGYKTQFGDKISTYKKEWLKERTRLQHTKFNRDNFAPEIKNQFDQTTLNEYADSLQTEFTQTEALITINDTVAPDSIVVCSAGSLPGDLQRLWNPAVPNTYHLEYGYSCMGYEINGALGAKMAASDNQEVYSIVGDGSFCMSHSELLTSLQYGKKINIMLFDNSGFGCINNLQMANGSDSFFCEFRDNNNQIMQVDYAKIAEGYGAKVYKANTKEDLVNALEDAKKQTKTTLIDMKVLPKTMSEGYLNWWNVGVSEVSNKESITRAYEAKQINLKKARLY</sequence>
<feature type="chain" id="PRO_0000352545" description="3D-(3,5/4)-trihydroxycyclohexane-1,2-dione hydrolase">
    <location>
        <begin position="1"/>
        <end position="638"/>
    </location>
</feature>
<feature type="region of interest" description="Thiamine pyrophosphate binding" evidence="1">
    <location>
        <begin position="442"/>
        <end position="523"/>
    </location>
</feature>
<feature type="binding site" evidence="1">
    <location>
        <position position="67"/>
    </location>
    <ligand>
        <name>thiamine diphosphate</name>
        <dbReference type="ChEBI" id="CHEBI:58937"/>
    </ligand>
</feature>
<feature type="binding site" evidence="1">
    <location>
        <position position="494"/>
    </location>
    <ligand>
        <name>Mg(2+)</name>
        <dbReference type="ChEBI" id="CHEBI:18420"/>
    </ligand>
</feature>
<feature type="binding site" evidence="1">
    <location>
        <position position="521"/>
    </location>
    <ligand>
        <name>Mg(2+)</name>
        <dbReference type="ChEBI" id="CHEBI:18420"/>
    </ligand>
</feature>
<comment type="function">
    <text evidence="1">Involved in the cleavage of the C1-C2 bond of 3D-(3,5/4)-trihydroxycyclohexane-1,2-dione (THcHDO) to yield 5-deoxy-glucuronate (5DG).</text>
</comment>
<comment type="catalytic activity">
    <reaction evidence="1">
        <text>3D-3,5/4-trihydroxycyclohexane-1,2-dione + H2O = 5-deoxy-D-glucuronate + H(+)</text>
        <dbReference type="Rhea" id="RHEA:25836"/>
        <dbReference type="ChEBI" id="CHEBI:15377"/>
        <dbReference type="ChEBI" id="CHEBI:15378"/>
        <dbReference type="ChEBI" id="CHEBI:28446"/>
        <dbReference type="ChEBI" id="CHEBI:58852"/>
        <dbReference type="EC" id="3.7.1.22"/>
    </reaction>
</comment>
<comment type="cofactor">
    <cofactor evidence="1">
        <name>Mg(2+)</name>
        <dbReference type="ChEBI" id="CHEBI:18420"/>
    </cofactor>
    <text evidence="1">Binds 1 Mg(2+) ion per subunit.</text>
</comment>
<comment type="cofactor">
    <cofactor evidence="1">
        <name>thiamine diphosphate</name>
        <dbReference type="ChEBI" id="CHEBI:58937"/>
    </cofactor>
    <text evidence="1">Binds 1 thiamine pyrophosphate per subunit.</text>
</comment>
<comment type="pathway">
    <text evidence="1">Polyol metabolism; myo-inositol degradation into acetyl-CoA; acetyl-CoA from myo-inositol: step 3/7.</text>
</comment>
<comment type="similarity">
    <text evidence="1">Belongs to the TPP enzyme family.</text>
</comment>
<evidence type="ECO:0000255" key="1">
    <source>
        <dbReference type="HAMAP-Rule" id="MF_01669"/>
    </source>
</evidence>
<dbReference type="EC" id="3.7.1.22" evidence="1"/>
<dbReference type="EMBL" id="AL596164">
    <property type="protein sequence ID" value="CAC95637.1"/>
    <property type="molecule type" value="Genomic_DNA"/>
</dbReference>
<dbReference type="PIR" id="AE1483">
    <property type="entry name" value="AE1483"/>
</dbReference>
<dbReference type="RefSeq" id="WP_010990387.1">
    <property type="nucleotide sequence ID" value="NC_003212.1"/>
</dbReference>
<dbReference type="SMR" id="Q92EQ4"/>
<dbReference type="STRING" id="272626.gene:17564731"/>
<dbReference type="KEGG" id="lin:lin0404"/>
<dbReference type="eggNOG" id="COG3962">
    <property type="taxonomic scope" value="Bacteria"/>
</dbReference>
<dbReference type="HOGENOM" id="CLU_013748_6_0_9"/>
<dbReference type="OrthoDB" id="4494979at2"/>
<dbReference type="UniPathway" id="UPA00076">
    <property type="reaction ID" value="UER00145"/>
</dbReference>
<dbReference type="Proteomes" id="UP000002513">
    <property type="component" value="Chromosome"/>
</dbReference>
<dbReference type="GO" id="GO:0005948">
    <property type="term" value="C:acetolactate synthase complex"/>
    <property type="evidence" value="ECO:0007669"/>
    <property type="project" value="TreeGrafter"/>
</dbReference>
<dbReference type="GO" id="GO:0102481">
    <property type="term" value="F:3D-(3,5/4)-trihydroxycyclohexane-1,2-dione hydrolase activity"/>
    <property type="evidence" value="ECO:0007669"/>
    <property type="project" value="UniProtKB-EC"/>
</dbReference>
<dbReference type="GO" id="GO:0003984">
    <property type="term" value="F:acetolactate synthase activity"/>
    <property type="evidence" value="ECO:0007669"/>
    <property type="project" value="TreeGrafter"/>
</dbReference>
<dbReference type="GO" id="GO:0050660">
    <property type="term" value="F:flavin adenine dinucleotide binding"/>
    <property type="evidence" value="ECO:0007669"/>
    <property type="project" value="TreeGrafter"/>
</dbReference>
<dbReference type="GO" id="GO:0000287">
    <property type="term" value="F:magnesium ion binding"/>
    <property type="evidence" value="ECO:0007669"/>
    <property type="project" value="UniProtKB-UniRule"/>
</dbReference>
<dbReference type="GO" id="GO:0030976">
    <property type="term" value="F:thiamine pyrophosphate binding"/>
    <property type="evidence" value="ECO:0007669"/>
    <property type="project" value="UniProtKB-UniRule"/>
</dbReference>
<dbReference type="GO" id="GO:0019310">
    <property type="term" value="P:inositol catabolic process"/>
    <property type="evidence" value="ECO:0007669"/>
    <property type="project" value="UniProtKB-UniRule"/>
</dbReference>
<dbReference type="GO" id="GO:0009097">
    <property type="term" value="P:isoleucine biosynthetic process"/>
    <property type="evidence" value="ECO:0007669"/>
    <property type="project" value="TreeGrafter"/>
</dbReference>
<dbReference type="GO" id="GO:0009099">
    <property type="term" value="P:L-valine biosynthetic process"/>
    <property type="evidence" value="ECO:0007669"/>
    <property type="project" value="TreeGrafter"/>
</dbReference>
<dbReference type="CDD" id="cd07035">
    <property type="entry name" value="TPP_PYR_POX_like"/>
    <property type="match status" value="1"/>
</dbReference>
<dbReference type="Gene3D" id="3.40.50.970">
    <property type="match status" value="2"/>
</dbReference>
<dbReference type="Gene3D" id="3.40.50.1220">
    <property type="entry name" value="TPP-binding domain"/>
    <property type="match status" value="1"/>
</dbReference>
<dbReference type="HAMAP" id="MF_01669">
    <property type="entry name" value="IolD"/>
    <property type="match status" value="1"/>
</dbReference>
<dbReference type="InterPro" id="IPR029035">
    <property type="entry name" value="DHS-like_NAD/FAD-binding_dom"/>
</dbReference>
<dbReference type="InterPro" id="IPR030817">
    <property type="entry name" value="Myo_inos_IolD"/>
</dbReference>
<dbReference type="InterPro" id="IPR023757">
    <property type="entry name" value="THcHDO_hydrolase_firmi"/>
</dbReference>
<dbReference type="InterPro" id="IPR029061">
    <property type="entry name" value="THDP-binding"/>
</dbReference>
<dbReference type="InterPro" id="IPR012000">
    <property type="entry name" value="Thiamin_PyroP_enz_cen_dom"/>
</dbReference>
<dbReference type="InterPro" id="IPR012001">
    <property type="entry name" value="Thiamin_PyroP_enz_TPP-bd_dom"/>
</dbReference>
<dbReference type="InterPro" id="IPR045229">
    <property type="entry name" value="TPP_enz"/>
</dbReference>
<dbReference type="InterPro" id="IPR011766">
    <property type="entry name" value="TPP_enzyme_TPP-bd"/>
</dbReference>
<dbReference type="NCBIfam" id="TIGR04377">
    <property type="entry name" value="myo_inos_iolD"/>
    <property type="match status" value="1"/>
</dbReference>
<dbReference type="PANTHER" id="PTHR18968:SF9">
    <property type="entry name" value="3D-(3,5_4)-TRIHYDROXYCYCLOHEXANE-1,2-DIONE HYDROLASE"/>
    <property type="match status" value="1"/>
</dbReference>
<dbReference type="PANTHER" id="PTHR18968">
    <property type="entry name" value="THIAMINE PYROPHOSPHATE ENZYMES"/>
    <property type="match status" value="1"/>
</dbReference>
<dbReference type="Pfam" id="PF02775">
    <property type="entry name" value="TPP_enzyme_C"/>
    <property type="match status" value="1"/>
</dbReference>
<dbReference type="Pfam" id="PF00205">
    <property type="entry name" value="TPP_enzyme_M"/>
    <property type="match status" value="1"/>
</dbReference>
<dbReference type="Pfam" id="PF02776">
    <property type="entry name" value="TPP_enzyme_N"/>
    <property type="match status" value="1"/>
</dbReference>
<dbReference type="SUPFAM" id="SSF52467">
    <property type="entry name" value="DHS-like NAD/FAD-binding domain"/>
    <property type="match status" value="1"/>
</dbReference>
<dbReference type="SUPFAM" id="SSF52518">
    <property type="entry name" value="Thiamin diphosphate-binding fold (THDP-binding)"/>
    <property type="match status" value="2"/>
</dbReference>